<feature type="chain" id="PRO_0000249956" description="Molybdenum cofactor sulfurase">
    <location>
        <begin position="1"/>
        <end position="781"/>
    </location>
</feature>
<feature type="domain" description="MOSC" evidence="1">
    <location>
        <begin position="635"/>
        <end position="781"/>
    </location>
</feature>
<feature type="active site" evidence="1">
    <location>
        <position position="413"/>
    </location>
</feature>
<feature type="modified residue" description="N6-(pyridoxal phosphate)lysine" evidence="1">
    <location>
        <position position="246"/>
    </location>
</feature>
<feature type="modified residue" description="Phosphoserine" evidence="3">
    <location>
        <position position="734"/>
    </location>
</feature>
<feature type="sequence conflict" description="In Ref. 4; AAD50777." evidence="5" ref="4">
    <original>E</original>
    <variation>A</variation>
    <location>
        <position position="133"/>
    </location>
</feature>
<feature type="sequence conflict" description="In Ref. 4; AAD50777." evidence="5" ref="4">
    <original>H</original>
    <variation>Y</variation>
    <location>
        <position position="156"/>
    </location>
</feature>
<protein>
    <recommendedName>
        <fullName evidence="1">Molybdenum cofactor sulfurase</fullName>
        <shortName evidence="1">MCS</shortName>
        <shortName evidence="1">MOS</shortName>
        <shortName evidence="1">MoCo sulfurase</shortName>
        <ecNumber evidence="1 4">2.8.1.9</ecNumber>
    </recommendedName>
    <alternativeName>
        <fullName evidence="1">Molybdenum cofactor sulfurtransferase</fullName>
    </alternativeName>
    <alternativeName>
        <fullName evidence="1">Protein maroon-like</fullName>
        <shortName evidence="1">Ma-l</shortName>
    </alternativeName>
</protein>
<sequence length="781" mass="88104">MTSYRPEFSASEQSQIDAEFSRLASNKSVYLDHAGTTLYAESQVTAAAEQLQRNVICNPHTCRLTGDFVDQVRFKILEFFNTTAEDYHVIFTANATAALSLVAENFDFGSSGEFHFCQENHTSVLGMRERVRENGIYMLRENEISGGKHKANGKVHEVSGKTGNSLLTFSAQCNFSGYKIPLEVIEQIQIDGLAKPGKELWSSLGEKKKNMHNDYYICLDAASFVATSPLDLQKYRPDYVCLSFYKIFGYPTGVGALLVSRRGAEVFQKRRFFGGGTINYAYPHAMDYQLRETFHQRYEDGTLPFLSIVGLLEGFRTLERLVPRTDEFSTMERISRHVFGLAKYLEDQLRQLHHPNGEPLVKLYNKVGYQDKSRQGGIVAFNVRTESGSFVGFGEIACVAALHGILLRTGCFCNIGACQYYLGLDEDALDAIYKRAGRICGDYFDLIDGQPTGAVRVSFGYMTTIQDVDKLLQMLRSSYLATKPLQRIQFIEEQAEQLPPLLKERVQLLRPKLLQMAIYPVKSCAAFKIELPGSWPLTDQGLKYDREWMIVDMNGMALTQKRCTELCLIRPVIKVDQLELQFGENSTISVPLSLDDQAADTAKCVSKVCRQPVEGLDCGDRVAQWLSENLGMEGLRLLRQSGQRNSSKDQQKLSLVNQAQFLLLNKSSVRSLQFEEPLDETVDRFRANIIIDTGSAFEELTYKALSIGGIQFQVEGPCQRCDMICINQRTGERSPETLTTISRLQKGRMRFGIYITRIPQDTKELEPKEQHMTCGDVVLVE</sequence>
<name>MOCOS_DROME</name>
<organism>
    <name type="scientific">Drosophila melanogaster</name>
    <name type="common">Fruit fly</name>
    <dbReference type="NCBI Taxonomy" id="7227"/>
    <lineage>
        <taxon>Eukaryota</taxon>
        <taxon>Metazoa</taxon>
        <taxon>Ecdysozoa</taxon>
        <taxon>Arthropoda</taxon>
        <taxon>Hexapoda</taxon>
        <taxon>Insecta</taxon>
        <taxon>Pterygota</taxon>
        <taxon>Neoptera</taxon>
        <taxon>Endopterygota</taxon>
        <taxon>Diptera</taxon>
        <taxon>Brachycera</taxon>
        <taxon>Muscomorpha</taxon>
        <taxon>Ephydroidea</taxon>
        <taxon>Drosophilidae</taxon>
        <taxon>Drosophila</taxon>
        <taxon>Sophophora</taxon>
    </lineage>
</organism>
<proteinExistence type="evidence at protein level"/>
<gene>
    <name evidence="1" type="primary">mal</name>
    <name type="ORF">CG1692</name>
</gene>
<dbReference type="EC" id="2.8.1.9" evidence="1 4"/>
<dbReference type="EMBL" id="AE014298">
    <property type="protein sequence ID" value="AAF50901.1"/>
    <property type="molecule type" value="Genomic_DNA"/>
</dbReference>
<dbReference type="EMBL" id="AY118319">
    <property type="protein sequence ID" value="AAM48348.1"/>
    <property type="molecule type" value="mRNA"/>
</dbReference>
<dbReference type="EMBL" id="AF162681">
    <property type="protein sequence ID" value="AAD50777.1"/>
    <property type="status" value="ALT_FRAME"/>
    <property type="molecule type" value="Genomic_DNA"/>
</dbReference>
<dbReference type="RefSeq" id="NP_001285493.1">
    <property type="nucleotide sequence ID" value="NM_001298564.1"/>
</dbReference>
<dbReference type="RefSeq" id="NP_523423.1">
    <property type="nucleotide sequence ID" value="NM_078699.3"/>
</dbReference>
<dbReference type="SMR" id="Q9VRA2"/>
<dbReference type="BioGRID" id="59334">
    <property type="interactions" value="1"/>
</dbReference>
<dbReference type="FunCoup" id="Q9VRA2">
    <property type="interactions" value="163"/>
</dbReference>
<dbReference type="IntAct" id="Q9VRA2">
    <property type="interactions" value="2"/>
</dbReference>
<dbReference type="STRING" id="7227.FBpp0311241"/>
<dbReference type="iPTMnet" id="Q9VRA2"/>
<dbReference type="PaxDb" id="7227-FBpp0076998"/>
<dbReference type="DNASU" id="33045"/>
<dbReference type="EnsemblMetazoa" id="FBtr0077306">
    <property type="protein sequence ID" value="FBpp0076998"/>
    <property type="gene ID" value="FBgn0002641"/>
</dbReference>
<dbReference type="EnsemblMetazoa" id="FBtr0344987">
    <property type="protein sequence ID" value="FBpp0311241"/>
    <property type="gene ID" value="FBgn0002641"/>
</dbReference>
<dbReference type="GeneID" id="33045"/>
<dbReference type="KEGG" id="dme:Dmel_CG1692"/>
<dbReference type="AGR" id="FB:FBgn0002641"/>
<dbReference type="CTD" id="4118"/>
<dbReference type="FlyBase" id="FBgn0002641">
    <property type="gene designation" value="mal"/>
</dbReference>
<dbReference type="VEuPathDB" id="VectorBase:FBgn0002641"/>
<dbReference type="eggNOG" id="KOG2142">
    <property type="taxonomic scope" value="Eukaryota"/>
</dbReference>
<dbReference type="HOGENOM" id="CLU_010913_0_1_1"/>
<dbReference type="InParanoid" id="Q9VRA2"/>
<dbReference type="OMA" id="PCTRCQM"/>
<dbReference type="OrthoDB" id="420046at2759"/>
<dbReference type="PhylomeDB" id="Q9VRA2"/>
<dbReference type="Reactome" id="R-DME-947581">
    <property type="pathway name" value="Molybdenum cofactor biosynthesis"/>
</dbReference>
<dbReference type="UniPathway" id="UPA00344"/>
<dbReference type="BioGRID-ORCS" id="33045">
    <property type="hits" value="0 hits in 1 CRISPR screen"/>
</dbReference>
<dbReference type="GenomeRNAi" id="33045"/>
<dbReference type="PRO" id="PR:Q9VRA2"/>
<dbReference type="Proteomes" id="UP000000803">
    <property type="component" value="Chromosome X"/>
</dbReference>
<dbReference type="Bgee" id="FBgn0002641">
    <property type="expression patterns" value="Expressed in enterocyte of anterior adult midgut epithelium in digestive tract and 73 other cell types or tissues"/>
</dbReference>
<dbReference type="ExpressionAtlas" id="Q9VRA2">
    <property type="expression patterns" value="baseline and differential"/>
</dbReference>
<dbReference type="GO" id="GO:0016829">
    <property type="term" value="F:lyase activity"/>
    <property type="evidence" value="ECO:0007669"/>
    <property type="project" value="UniProtKB-UniRule"/>
</dbReference>
<dbReference type="GO" id="GO:0008265">
    <property type="term" value="F:molybdenum cofactor sulfurtransferase activity"/>
    <property type="evidence" value="ECO:0000315"/>
    <property type="project" value="UniProtKB"/>
</dbReference>
<dbReference type="GO" id="GO:0030151">
    <property type="term" value="F:molybdenum ion binding"/>
    <property type="evidence" value="ECO:0007669"/>
    <property type="project" value="UniProtKB-UniRule"/>
</dbReference>
<dbReference type="GO" id="GO:0030170">
    <property type="term" value="F:pyridoxal phosphate binding"/>
    <property type="evidence" value="ECO:0007669"/>
    <property type="project" value="UniProtKB-UniRule"/>
</dbReference>
<dbReference type="GO" id="GO:0006777">
    <property type="term" value="P:Mo-molybdopterin cofactor biosynthetic process"/>
    <property type="evidence" value="ECO:0007669"/>
    <property type="project" value="UniProtKB-UniRule"/>
</dbReference>
<dbReference type="GO" id="GO:0032324">
    <property type="term" value="P:molybdopterin cofactor biosynthetic process"/>
    <property type="evidence" value="ECO:0000315"/>
    <property type="project" value="FlyBase"/>
</dbReference>
<dbReference type="GO" id="GO:0043545">
    <property type="term" value="P:molybdopterin cofactor metabolic process"/>
    <property type="evidence" value="ECO:0000315"/>
    <property type="project" value="UniProtKB"/>
</dbReference>
<dbReference type="FunFam" id="3.40.640.10:FF:000119">
    <property type="entry name" value="Molybdenum cofactor sulfurase"/>
    <property type="match status" value="1"/>
</dbReference>
<dbReference type="FunFam" id="3.90.1150.10:FF:000079">
    <property type="entry name" value="Molybdenum cofactor sulfurase"/>
    <property type="match status" value="1"/>
</dbReference>
<dbReference type="Gene3D" id="3.90.1150.10">
    <property type="entry name" value="Aspartate Aminotransferase, domain 1"/>
    <property type="match status" value="1"/>
</dbReference>
<dbReference type="Gene3D" id="3.40.640.10">
    <property type="entry name" value="Type I PLP-dependent aspartate aminotransferase-like (Major domain)"/>
    <property type="match status" value="1"/>
</dbReference>
<dbReference type="HAMAP" id="MF_03050">
    <property type="entry name" value="MOCOS"/>
    <property type="match status" value="1"/>
</dbReference>
<dbReference type="InterPro" id="IPR000192">
    <property type="entry name" value="Aminotrans_V_dom"/>
</dbReference>
<dbReference type="InterPro" id="IPR005302">
    <property type="entry name" value="MoCF_Sase_C"/>
</dbReference>
<dbReference type="InterPro" id="IPR028886">
    <property type="entry name" value="MoCo_sulfurase"/>
</dbReference>
<dbReference type="InterPro" id="IPR005303">
    <property type="entry name" value="MOCOS_middle"/>
</dbReference>
<dbReference type="InterPro" id="IPR015424">
    <property type="entry name" value="PyrdxlP-dep_Trfase"/>
</dbReference>
<dbReference type="InterPro" id="IPR015421">
    <property type="entry name" value="PyrdxlP-dep_Trfase_major"/>
</dbReference>
<dbReference type="InterPro" id="IPR015422">
    <property type="entry name" value="PyrdxlP-dep_Trfase_small"/>
</dbReference>
<dbReference type="InterPro" id="IPR011037">
    <property type="entry name" value="Pyrv_Knase-like_insert_dom_sf"/>
</dbReference>
<dbReference type="PANTHER" id="PTHR14237:SF19">
    <property type="entry name" value="MITOCHONDRIAL AMIDOXIME REDUCING COMPONENT 1"/>
    <property type="match status" value="1"/>
</dbReference>
<dbReference type="PANTHER" id="PTHR14237">
    <property type="entry name" value="MOLYBDOPTERIN COFACTOR SULFURASE MOSC"/>
    <property type="match status" value="1"/>
</dbReference>
<dbReference type="Pfam" id="PF00266">
    <property type="entry name" value="Aminotran_5"/>
    <property type="match status" value="2"/>
</dbReference>
<dbReference type="Pfam" id="PF03473">
    <property type="entry name" value="MOSC"/>
    <property type="match status" value="1"/>
</dbReference>
<dbReference type="Pfam" id="PF03476">
    <property type="entry name" value="MOSC_N"/>
    <property type="match status" value="1"/>
</dbReference>
<dbReference type="SUPFAM" id="SSF141673">
    <property type="entry name" value="MOSC N-terminal domain-like"/>
    <property type="match status" value="1"/>
</dbReference>
<dbReference type="SUPFAM" id="SSF50800">
    <property type="entry name" value="PK beta-barrel domain-like"/>
    <property type="match status" value="1"/>
</dbReference>
<dbReference type="SUPFAM" id="SSF53383">
    <property type="entry name" value="PLP-dependent transferases"/>
    <property type="match status" value="1"/>
</dbReference>
<dbReference type="PROSITE" id="PS51340">
    <property type="entry name" value="MOSC"/>
    <property type="match status" value="1"/>
</dbReference>
<reference key="1">
    <citation type="journal article" date="2000" name="Science">
        <title>The genome sequence of Drosophila melanogaster.</title>
        <authorList>
            <person name="Adams M.D."/>
            <person name="Celniker S.E."/>
            <person name="Holt R.A."/>
            <person name="Evans C.A."/>
            <person name="Gocayne J.D."/>
            <person name="Amanatides P.G."/>
            <person name="Scherer S.E."/>
            <person name="Li P.W."/>
            <person name="Hoskins R.A."/>
            <person name="Galle R.F."/>
            <person name="George R.A."/>
            <person name="Lewis S.E."/>
            <person name="Richards S."/>
            <person name="Ashburner M."/>
            <person name="Henderson S.N."/>
            <person name="Sutton G.G."/>
            <person name="Wortman J.R."/>
            <person name="Yandell M.D."/>
            <person name="Zhang Q."/>
            <person name="Chen L.X."/>
            <person name="Brandon R.C."/>
            <person name="Rogers Y.-H.C."/>
            <person name="Blazej R.G."/>
            <person name="Champe M."/>
            <person name="Pfeiffer B.D."/>
            <person name="Wan K.H."/>
            <person name="Doyle C."/>
            <person name="Baxter E.G."/>
            <person name="Helt G."/>
            <person name="Nelson C.R."/>
            <person name="Miklos G.L.G."/>
            <person name="Abril J.F."/>
            <person name="Agbayani A."/>
            <person name="An H.-J."/>
            <person name="Andrews-Pfannkoch C."/>
            <person name="Baldwin D."/>
            <person name="Ballew R.M."/>
            <person name="Basu A."/>
            <person name="Baxendale J."/>
            <person name="Bayraktaroglu L."/>
            <person name="Beasley E.M."/>
            <person name="Beeson K.Y."/>
            <person name="Benos P.V."/>
            <person name="Berman B.P."/>
            <person name="Bhandari D."/>
            <person name="Bolshakov S."/>
            <person name="Borkova D."/>
            <person name="Botchan M.R."/>
            <person name="Bouck J."/>
            <person name="Brokstein P."/>
            <person name="Brottier P."/>
            <person name="Burtis K.C."/>
            <person name="Busam D.A."/>
            <person name="Butler H."/>
            <person name="Cadieu E."/>
            <person name="Center A."/>
            <person name="Chandra I."/>
            <person name="Cherry J.M."/>
            <person name="Cawley S."/>
            <person name="Dahlke C."/>
            <person name="Davenport L.B."/>
            <person name="Davies P."/>
            <person name="de Pablos B."/>
            <person name="Delcher A."/>
            <person name="Deng Z."/>
            <person name="Mays A.D."/>
            <person name="Dew I."/>
            <person name="Dietz S.M."/>
            <person name="Dodson K."/>
            <person name="Doup L.E."/>
            <person name="Downes M."/>
            <person name="Dugan-Rocha S."/>
            <person name="Dunkov B.C."/>
            <person name="Dunn P."/>
            <person name="Durbin K.J."/>
            <person name="Evangelista C.C."/>
            <person name="Ferraz C."/>
            <person name="Ferriera S."/>
            <person name="Fleischmann W."/>
            <person name="Fosler C."/>
            <person name="Gabrielian A.E."/>
            <person name="Garg N.S."/>
            <person name="Gelbart W.M."/>
            <person name="Glasser K."/>
            <person name="Glodek A."/>
            <person name="Gong F."/>
            <person name="Gorrell J.H."/>
            <person name="Gu Z."/>
            <person name="Guan P."/>
            <person name="Harris M."/>
            <person name="Harris N.L."/>
            <person name="Harvey D.A."/>
            <person name="Heiman T.J."/>
            <person name="Hernandez J.R."/>
            <person name="Houck J."/>
            <person name="Hostin D."/>
            <person name="Houston K.A."/>
            <person name="Howland T.J."/>
            <person name="Wei M.-H."/>
            <person name="Ibegwam C."/>
            <person name="Jalali M."/>
            <person name="Kalush F."/>
            <person name="Karpen G.H."/>
            <person name="Ke Z."/>
            <person name="Kennison J.A."/>
            <person name="Ketchum K.A."/>
            <person name="Kimmel B.E."/>
            <person name="Kodira C.D."/>
            <person name="Kraft C.L."/>
            <person name="Kravitz S."/>
            <person name="Kulp D."/>
            <person name="Lai Z."/>
            <person name="Lasko P."/>
            <person name="Lei Y."/>
            <person name="Levitsky A.A."/>
            <person name="Li J.H."/>
            <person name="Li Z."/>
            <person name="Liang Y."/>
            <person name="Lin X."/>
            <person name="Liu X."/>
            <person name="Mattei B."/>
            <person name="McIntosh T.C."/>
            <person name="McLeod M.P."/>
            <person name="McPherson D."/>
            <person name="Merkulov G."/>
            <person name="Milshina N.V."/>
            <person name="Mobarry C."/>
            <person name="Morris J."/>
            <person name="Moshrefi A."/>
            <person name="Mount S.M."/>
            <person name="Moy M."/>
            <person name="Murphy B."/>
            <person name="Murphy L."/>
            <person name="Muzny D.M."/>
            <person name="Nelson D.L."/>
            <person name="Nelson D.R."/>
            <person name="Nelson K.A."/>
            <person name="Nixon K."/>
            <person name="Nusskern D.R."/>
            <person name="Pacleb J.M."/>
            <person name="Palazzolo M."/>
            <person name="Pittman G.S."/>
            <person name="Pan S."/>
            <person name="Pollard J."/>
            <person name="Puri V."/>
            <person name="Reese M.G."/>
            <person name="Reinert K."/>
            <person name="Remington K."/>
            <person name="Saunders R.D.C."/>
            <person name="Scheeler F."/>
            <person name="Shen H."/>
            <person name="Shue B.C."/>
            <person name="Siden-Kiamos I."/>
            <person name="Simpson M."/>
            <person name="Skupski M.P."/>
            <person name="Smith T.J."/>
            <person name="Spier E."/>
            <person name="Spradling A.C."/>
            <person name="Stapleton M."/>
            <person name="Strong R."/>
            <person name="Sun E."/>
            <person name="Svirskas R."/>
            <person name="Tector C."/>
            <person name="Turner R."/>
            <person name="Venter E."/>
            <person name="Wang A.H."/>
            <person name="Wang X."/>
            <person name="Wang Z.-Y."/>
            <person name="Wassarman D.A."/>
            <person name="Weinstock G.M."/>
            <person name="Weissenbach J."/>
            <person name="Williams S.M."/>
            <person name="Woodage T."/>
            <person name="Worley K.C."/>
            <person name="Wu D."/>
            <person name="Yang S."/>
            <person name="Yao Q.A."/>
            <person name="Ye J."/>
            <person name="Yeh R.-F."/>
            <person name="Zaveri J.S."/>
            <person name="Zhan M."/>
            <person name="Zhang G."/>
            <person name="Zhao Q."/>
            <person name="Zheng L."/>
            <person name="Zheng X.H."/>
            <person name="Zhong F.N."/>
            <person name="Zhong W."/>
            <person name="Zhou X."/>
            <person name="Zhu S.C."/>
            <person name="Zhu X."/>
            <person name="Smith H.O."/>
            <person name="Gibbs R.A."/>
            <person name="Myers E.W."/>
            <person name="Rubin G.M."/>
            <person name="Venter J.C."/>
        </authorList>
    </citation>
    <scope>NUCLEOTIDE SEQUENCE [LARGE SCALE GENOMIC DNA]</scope>
    <source>
        <strain>Berkeley</strain>
    </source>
</reference>
<reference key="2">
    <citation type="journal article" date="2002" name="Genome Biol.">
        <title>Annotation of the Drosophila melanogaster euchromatic genome: a systematic review.</title>
        <authorList>
            <person name="Misra S."/>
            <person name="Crosby M.A."/>
            <person name="Mungall C.J."/>
            <person name="Matthews B.B."/>
            <person name="Campbell K.S."/>
            <person name="Hradecky P."/>
            <person name="Huang Y."/>
            <person name="Kaminker J.S."/>
            <person name="Millburn G.H."/>
            <person name="Prochnik S.E."/>
            <person name="Smith C.D."/>
            <person name="Tupy J.L."/>
            <person name="Whitfield E.J."/>
            <person name="Bayraktaroglu L."/>
            <person name="Berman B.P."/>
            <person name="Bettencourt B.R."/>
            <person name="Celniker S.E."/>
            <person name="de Grey A.D.N.J."/>
            <person name="Drysdale R.A."/>
            <person name="Harris N.L."/>
            <person name="Richter J."/>
            <person name="Russo S."/>
            <person name="Schroeder A.J."/>
            <person name="Shu S.Q."/>
            <person name="Stapleton M."/>
            <person name="Yamada C."/>
            <person name="Ashburner M."/>
            <person name="Gelbart W.M."/>
            <person name="Rubin G.M."/>
            <person name="Lewis S.E."/>
        </authorList>
    </citation>
    <scope>GENOME REANNOTATION</scope>
    <source>
        <strain>Berkeley</strain>
    </source>
</reference>
<reference key="3">
    <citation type="journal article" date="2002" name="Genome Biol.">
        <title>A Drosophila full-length cDNA resource.</title>
        <authorList>
            <person name="Stapleton M."/>
            <person name="Carlson J.W."/>
            <person name="Brokstein P."/>
            <person name="Yu C."/>
            <person name="Champe M."/>
            <person name="George R.A."/>
            <person name="Guarin H."/>
            <person name="Kronmiller B."/>
            <person name="Pacleb J.M."/>
            <person name="Park S."/>
            <person name="Wan K.H."/>
            <person name="Rubin G.M."/>
            <person name="Celniker S.E."/>
        </authorList>
    </citation>
    <scope>NUCLEOTIDE SEQUENCE [LARGE SCALE MRNA]</scope>
    <source>
        <strain>Berkeley</strain>
        <tissue>Head</tissue>
    </source>
</reference>
<reference key="4">
    <citation type="journal article" date="2000" name="Mol. Microbiol.">
        <title>Comparison of the sequences of the Aspergillus nidulans hxB and Drosophila melanogaster ma-l genes with nifS from Azotobacter vinelandii suggests a mechanism for the insertion of the terminal sulphur atom in the molybdopterin cofactor.</title>
        <authorList>
            <person name="Amrani L."/>
            <person name="Primus J."/>
            <person name="Glatigny A."/>
            <person name="Arcangeli L."/>
            <person name="Scazzocchio C."/>
            <person name="Finnerty V."/>
        </authorList>
    </citation>
    <scope>NUCLEOTIDE SEQUENCE [GENOMIC DNA] OF 1-758</scope>
    <scope>FUNCTION</scope>
    <scope>PATHWAY</scope>
    <source>
        <strain>Canton-S</strain>
    </source>
</reference>
<reference key="5">
    <citation type="journal article" date="1982" name="J. Biol. Chem.">
        <title>Drosophila melanogaster ma-l mutants are defective in the sulfuration of desulfo Mo hydroxylases.</title>
        <authorList>
            <person name="Wahl R.C."/>
            <person name="Warner C.K."/>
            <person name="Finnerty V."/>
            <person name="Rajagopalan K.V."/>
        </authorList>
    </citation>
    <scope>ENZYME ACTIVITY</scope>
</reference>
<reference key="6">
    <citation type="journal article" date="2008" name="J. Proteome Res.">
        <title>Phosphoproteome analysis of Drosophila melanogaster embryos.</title>
        <authorList>
            <person name="Zhai B."/>
            <person name="Villen J."/>
            <person name="Beausoleil S.A."/>
            <person name="Mintseris J."/>
            <person name="Gygi S.P."/>
        </authorList>
    </citation>
    <scope>PHOSPHORYLATION [LARGE SCALE ANALYSIS] AT SER-734</scope>
    <scope>IDENTIFICATION BY MASS SPECTROMETRY</scope>
    <source>
        <tissue>Embryo</tissue>
    </source>
</reference>
<comment type="function">
    <text evidence="1 2">Sulfurates the molybdenum cofactor. Sulfation of molybdenum is essential for xanthine dehydrogenase (XDH) and aldehyde oxidase (ADO) enzymes in which molybdenum cofactor is liganded by 1 oxygen and 1 sulfur atom in active form.</text>
</comment>
<comment type="catalytic activity">
    <reaction evidence="1 4">
        <text>Mo-molybdopterin + L-cysteine + AH2 = thio-Mo-molybdopterin + L-alanine + A + H2O</text>
        <dbReference type="Rhea" id="RHEA:42636"/>
        <dbReference type="ChEBI" id="CHEBI:13193"/>
        <dbReference type="ChEBI" id="CHEBI:15377"/>
        <dbReference type="ChEBI" id="CHEBI:17499"/>
        <dbReference type="ChEBI" id="CHEBI:35235"/>
        <dbReference type="ChEBI" id="CHEBI:57972"/>
        <dbReference type="ChEBI" id="CHEBI:71302"/>
        <dbReference type="ChEBI" id="CHEBI:82685"/>
        <dbReference type="EC" id="2.8.1.9"/>
    </reaction>
</comment>
<comment type="cofactor">
    <cofactor evidence="1">
        <name>pyridoxal 5'-phosphate</name>
        <dbReference type="ChEBI" id="CHEBI:597326"/>
    </cofactor>
</comment>
<comment type="pathway">
    <text evidence="2">Cofactor biosynthesis; molybdopterin biosynthesis.</text>
</comment>
<comment type="similarity">
    <text evidence="1">Belongs to the class-V pyridoxal-phosphate-dependent aminotransferase family. MOCOS subfamily.</text>
</comment>
<comment type="sequence caution" evidence="5">
    <conflict type="frameshift">
        <sequence resource="EMBL-CDS" id="AAD50777"/>
    </conflict>
</comment>
<keyword id="KW-0501">Molybdenum cofactor biosynthesis</keyword>
<keyword id="KW-0597">Phosphoprotein</keyword>
<keyword id="KW-0663">Pyridoxal phosphate</keyword>
<keyword id="KW-1185">Reference proteome</keyword>
<keyword id="KW-0808">Transferase</keyword>
<accession>Q9VRA2</accession>
<accession>Q9U9P1</accession>
<evidence type="ECO:0000255" key="1">
    <source>
        <dbReference type="HAMAP-Rule" id="MF_03050"/>
    </source>
</evidence>
<evidence type="ECO:0000269" key="2">
    <source>
    </source>
</evidence>
<evidence type="ECO:0000269" key="3">
    <source>
    </source>
</evidence>
<evidence type="ECO:0000269" key="4">
    <source>
    </source>
</evidence>
<evidence type="ECO:0000305" key="5"/>